<proteinExistence type="evidence at protein level"/>
<name>YJGH_ECOLI</name>
<gene>
    <name type="primary">yjgH</name>
    <name type="ordered locus">b4248</name>
    <name type="ordered locus">JW4206</name>
</gene>
<keyword id="KW-0002">3D-structure</keyword>
<keyword id="KW-1185">Reference proteome</keyword>
<reference key="1">
    <citation type="journal article" date="1995" name="Nucleic Acids Res.">
        <title>Analysis of the Escherichia coli genome VI: DNA sequence of the region from 92.8 through 100 minutes.</title>
        <authorList>
            <person name="Burland V.D."/>
            <person name="Plunkett G. III"/>
            <person name="Sofia H.J."/>
            <person name="Daniels D.L."/>
            <person name="Blattner F.R."/>
        </authorList>
    </citation>
    <scope>NUCLEOTIDE SEQUENCE [LARGE SCALE GENOMIC DNA]</scope>
    <source>
        <strain>K12 / MG1655 / ATCC 47076</strain>
    </source>
</reference>
<reference key="2">
    <citation type="journal article" date="1997" name="Science">
        <title>The complete genome sequence of Escherichia coli K-12.</title>
        <authorList>
            <person name="Blattner F.R."/>
            <person name="Plunkett G. III"/>
            <person name="Bloch C.A."/>
            <person name="Perna N.T."/>
            <person name="Burland V."/>
            <person name="Riley M."/>
            <person name="Collado-Vides J."/>
            <person name="Glasner J.D."/>
            <person name="Rode C.K."/>
            <person name="Mayhew G.F."/>
            <person name="Gregor J."/>
            <person name="Davis N.W."/>
            <person name="Kirkpatrick H.A."/>
            <person name="Goeden M.A."/>
            <person name="Rose D.J."/>
            <person name="Mau B."/>
            <person name="Shao Y."/>
        </authorList>
    </citation>
    <scope>NUCLEOTIDE SEQUENCE [LARGE SCALE GENOMIC DNA]</scope>
    <source>
        <strain>K12 / MG1655 / ATCC 47076</strain>
    </source>
</reference>
<reference key="3">
    <citation type="journal article" date="2006" name="Mol. Syst. Biol.">
        <title>Highly accurate genome sequences of Escherichia coli K-12 strains MG1655 and W3110.</title>
        <authorList>
            <person name="Hayashi K."/>
            <person name="Morooka N."/>
            <person name="Yamamoto Y."/>
            <person name="Fujita K."/>
            <person name="Isono K."/>
            <person name="Choi S."/>
            <person name="Ohtsubo E."/>
            <person name="Baba T."/>
            <person name="Wanner B.L."/>
            <person name="Mori H."/>
            <person name="Horiuchi T."/>
        </authorList>
    </citation>
    <scope>NUCLEOTIDE SEQUENCE [LARGE SCALE GENOMIC DNA]</scope>
    <source>
        <strain>K12 / W3110 / ATCC 27325 / DSM 5911</strain>
    </source>
</reference>
<reference key="4">
    <citation type="submission" date="2005-01" db="PDB data bank">
        <title>The 2.5A crystal structure of protein yjgH from E. coli.</title>
        <authorList>
            <consortium name="Midwest center for structural genomics (MCSG)"/>
        </authorList>
    </citation>
    <scope>X-RAY CRYSTALLOGRAPHY (2.5 ANGSTROMS) OF 1-131</scope>
</reference>
<feature type="chain" id="PRO_0000170325" description="RutC family protein YjgH">
    <location>
        <begin position="1"/>
        <end position="131"/>
    </location>
</feature>
<feature type="strand" evidence="2">
    <location>
        <begin position="5"/>
        <end position="7"/>
    </location>
</feature>
<feature type="turn" evidence="2">
    <location>
        <begin position="14"/>
        <end position="20"/>
    </location>
</feature>
<feature type="strand" evidence="2">
    <location>
        <begin position="23"/>
        <end position="27"/>
    </location>
</feature>
<feature type="strand" evidence="2">
    <location>
        <begin position="30"/>
        <end position="36"/>
    </location>
</feature>
<feature type="helix" evidence="2">
    <location>
        <begin position="49"/>
        <end position="65"/>
    </location>
</feature>
<feature type="turn" evidence="2">
    <location>
        <begin position="66"/>
        <end position="68"/>
    </location>
</feature>
<feature type="helix" evidence="2">
    <location>
        <begin position="71"/>
        <end position="73"/>
    </location>
</feature>
<feature type="strand" evidence="2">
    <location>
        <begin position="74"/>
        <end position="83"/>
    </location>
</feature>
<feature type="helix" evidence="2">
    <location>
        <begin position="84"/>
        <end position="86"/>
    </location>
</feature>
<feature type="helix" evidence="2">
    <location>
        <begin position="88"/>
        <end position="98"/>
    </location>
</feature>
<feature type="strand" evidence="2">
    <location>
        <begin position="101"/>
        <end position="103"/>
    </location>
</feature>
<feature type="strand" evidence="2">
    <location>
        <begin position="108"/>
        <end position="111"/>
    </location>
</feature>
<feature type="strand" evidence="2">
    <location>
        <begin position="119"/>
        <end position="127"/>
    </location>
</feature>
<sequence>MVERTAVFPAGRHSLYAEHRYSAAIRSGDLLFVSGQVGSREDGTPEPDFQQQVRLAFDNLHATLAAAGCTFDDIIDVTSFHTDPENQFEDIMTVKNEIFSAPPYPNWTAVGVTWLAGFDFEIKVIARIPEQ</sequence>
<organism>
    <name type="scientific">Escherichia coli (strain K12)</name>
    <dbReference type="NCBI Taxonomy" id="83333"/>
    <lineage>
        <taxon>Bacteria</taxon>
        <taxon>Pseudomonadati</taxon>
        <taxon>Pseudomonadota</taxon>
        <taxon>Gammaproteobacteria</taxon>
        <taxon>Enterobacterales</taxon>
        <taxon>Enterobacteriaceae</taxon>
        <taxon>Escherichia</taxon>
    </lineage>
</organism>
<dbReference type="EMBL" id="U14003">
    <property type="protein sequence ID" value="AAA97145.1"/>
    <property type="molecule type" value="Genomic_DNA"/>
</dbReference>
<dbReference type="EMBL" id="U00096">
    <property type="protein sequence ID" value="AAC77205.1"/>
    <property type="molecule type" value="Genomic_DNA"/>
</dbReference>
<dbReference type="EMBL" id="AP009048">
    <property type="protein sequence ID" value="BAE78246.1"/>
    <property type="molecule type" value="Genomic_DNA"/>
</dbReference>
<dbReference type="PIR" id="S56474">
    <property type="entry name" value="S56474"/>
</dbReference>
<dbReference type="RefSeq" id="NP_418669.1">
    <property type="nucleotide sequence ID" value="NC_000913.3"/>
</dbReference>
<dbReference type="RefSeq" id="WP_000230281.1">
    <property type="nucleotide sequence ID" value="NZ_STEB01000013.1"/>
</dbReference>
<dbReference type="PDB" id="1PF5">
    <property type="method" value="X-ray"/>
    <property type="resolution" value="2.50 A"/>
    <property type="chains" value="A=1-131"/>
</dbReference>
<dbReference type="PDBsum" id="1PF5"/>
<dbReference type="SMR" id="P39332"/>
<dbReference type="BioGRID" id="4262944">
    <property type="interactions" value="22"/>
</dbReference>
<dbReference type="DIP" id="DIP-12603N"/>
<dbReference type="FunCoup" id="P39332">
    <property type="interactions" value="17"/>
</dbReference>
<dbReference type="IntAct" id="P39332">
    <property type="interactions" value="1"/>
</dbReference>
<dbReference type="STRING" id="511145.b4248"/>
<dbReference type="jPOST" id="P39332"/>
<dbReference type="PaxDb" id="511145-b4248"/>
<dbReference type="EnsemblBacteria" id="AAC77205">
    <property type="protein sequence ID" value="AAC77205"/>
    <property type="gene ID" value="b4248"/>
</dbReference>
<dbReference type="GeneID" id="948769"/>
<dbReference type="KEGG" id="ecj:JW4206"/>
<dbReference type="KEGG" id="eco:b4248"/>
<dbReference type="KEGG" id="ecoc:C3026_22925"/>
<dbReference type="PATRIC" id="fig|511145.12.peg.4379"/>
<dbReference type="EchoBASE" id="EB2417"/>
<dbReference type="eggNOG" id="COG0251">
    <property type="taxonomic scope" value="Bacteria"/>
</dbReference>
<dbReference type="HOGENOM" id="CLU_100715_4_1_6"/>
<dbReference type="InParanoid" id="P39332"/>
<dbReference type="OMA" id="NWTAIGV"/>
<dbReference type="OrthoDB" id="9809792at2"/>
<dbReference type="PhylomeDB" id="P39332"/>
<dbReference type="BioCyc" id="EcoCyc:G7879-MONOMER"/>
<dbReference type="EvolutionaryTrace" id="P39332"/>
<dbReference type="PRO" id="PR:P39332"/>
<dbReference type="Proteomes" id="UP000000625">
    <property type="component" value="Chromosome"/>
</dbReference>
<dbReference type="GO" id="GO:0005829">
    <property type="term" value="C:cytosol"/>
    <property type="evidence" value="ECO:0000318"/>
    <property type="project" value="GO_Central"/>
</dbReference>
<dbReference type="GO" id="GO:0019239">
    <property type="term" value="F:deaminase activity"/>
    <property type="evidence" value="ECO:0000318"/>
    <property type="project" value="GO_Central"/>
</dbReference>
<dbReference type="CDD" id="cd02198">
    <property type="entry name" value="YjgH_like"/>
    <property type="match status" value="1"/>
</dbReference>
<dbReference type="Gene3D" id="3.30.1330.40">
    <property type="entry name" value="RutC-like"/>
    <property type="match status" value="1"/>
</dbReference>
<dbReference type="InterPro" id="IPR035959">
    <property type="entry name" value="RutC-like_sf"/>
</dbReference>
<dbReference type="InterPro" id="IPR006175">
    <property type="entry name" value="YjgF/YER057c/UK114"/>
</dbReference>
<dbReference type="InterPro" id="IPR038743">
    <property type="entry name" value="YjgH-like"/>
</dbReference>
<dbReference type="PANTHER" id="PTHR11803">
    <property type="entry name" value="2-IMINOBUTANOATE/2-IMINOPROPANOATE DEAMINASE RIDA"/>
    <property type="match status" value="1"/>
</dbReference>
<dbReference type="PANTHER" id="PTHR11803:SF44">
    <property type="entry name" value="RUTC FAMILY PROTEIN YJGH"/>
    <property type="match status" value="1"/>
</dbReference>
<dbReference type="Pfam" id="PF01042">
    <property type="entry name" value="Ribonuc_L-PSP"/>
    <property type="match status" value="1"/>
</dbReference>
<dbReference type="SUPFAM" id="SSF55298">
    <property type="entry name" value="YjgF-like"/>
    <property type="match status" value="1"/>
</dbReference>
<comment type="interaction">
    <interactant intactId="EBI-561380">
        <id>P39332</id>
    </interactant>
    <interactant intactId="EBI-555015">
        <id>P0A9M8</id>
        <label>pta</label>
    </interactant>
    <organismsDiffer>false</organismsDiffer>
    <experiments>2</experiments>
</comment>
<comment type="similarity">
    <text evidence="1">Belongs to the RutC family.</text>
</comment>
<protein>
    <recommendedName>
        <fullName>RutC family protein YjgH</fullName>
    </recommendedName>
</protein>
<accession>P39332</accession>
<accession>Q2M660</accession>
<evidence type="ECO:0000305" key="1"/>
<evidence type="ECO:0007829" key="2">
    <source>
        <dbReference type="PDB" id="1PF5"/>
    </source>
</evidence>